<reference key="1">
    <citation type="journal article" date="2005" name="Nucleic Acids Res.">
        <title>Genome dynamics and diversity of Shigella species, the etiologic agents of bacillary dysentery.</title>
        <authorList>
            <person name="Yang F."/>
            <person name="Yang J."/>
            <person name="Zhang X."/>
            <person name="Chen L."/>
            <person name="Jiang Y."/>
            <person name="Yan Y."/>
            <person name="Tang X."/>
            <person name="Wang J."/>
            <person name="Xiong Z."/>
            <person name="Dong J."/>
            <person name="Xue Y."/>
            <person name="Zhu Y."/>
            <person name="Xu X."/>
            <person name="Sun L."/>
            <person name="Chen S."/>
            <person name="Nie H."/>
            <person name="Peng J."/>
            <person name="Xu J."/>
            <person name="Wang Y."/>
            <person name="Yuan Z."/>
            <person name="Wen Y."/>
            <person name="Yao Z."/>
            <person name="Shen Y."/>
            <person name="Qiang B."/>
            <person name="Hou Y."/>
            <person name="Yu J."/>
            <person name="Jin Q."/>
        </authorList>
    </citation>
    <scope>NUCLEOTIDE SEQUENCE [LARGE SCALE GENOMIC DNA]</scope>
    <source>
        <strain>Sd197</strain>
    </source>
</reference>
<sequence>MAHKKAGGSTRNGRDSEAKRLGVKRFGGESVLAGSIIVRQRGTKFHAGANVGCGRDHTLFAKADGKVKFEVKGPKNRKFISIEAE</sequence>
<organism>
    <name type="scientific">Shigella dysenteriae serotype 1 (strain Sd197)</name>
    <dbReference type="NCBI Taxonomy" id="300267"/>
    <lineage>
        <taxon>Bacteria</taxon>
        <taxon>Pseudomonadati</taxon>
        <taxon>Pseudomonadota</taxon>
        <taxon>Gammaproteobacteria</taxon>
        <taxon>Enterobacterales</taxon>
        <taxon>Enterobacteriaceae</taxon>
        <taxon>Shigella</taxon>
    </lineage>
</organism>
<accession>Q32BE8</accession>
<protein>
    <recommendedName>
        <fullName evidence="1">Large ribosomal subunit protein bL27</fullName>
    </recommendedName>
    <alternativeName>
        <fullName evidence="3">50S ribosomal protein L27</fullName>
    </alternativeName>
</protein>
<proteinExistence type="inferred from homology"/>
<feature type="chain" id="PRO_1000017608" description="Large ribosomal subunit protein bL27">
    <location>
        <begin position="1"/>
        <end position="85"/>
    </location>
</feature>
<feature type="region of interest" description="Disordered" evidence="2">
    <location>
        <begin position="1"/>
        <end position="20"/>
    </location>
</feature>
<evidence type="ECO:0000255" key="1">
    <source>
        <dbReference type="HAMAP-Rule" id="MF_00539"/>
    </source>
</evidence>
<evidence type="ECO:0000256" key="2">
    <source>
        <dbReference type="SAM" id="MobiDB-lite"/>
    </source>
</evidence>
<evidence type="ECO:0000305" key="3"/>
<keyword id="KW-1185">Reference proteome</keyword>
<keyword id="KW-0687">Ribonucleoprotein</keyword>
<keyword id="KW-0689">Ribosomal protein</keyword>
<comment type="similarity">
    <text evidence="1">Belongs to the bacterial ribosomal protein bL27 family.</text>
</comment>
<dbReference type="EMBL" id="CP000034">
    <property type="protein sequence ID" value="ABB63357.1"/>
    <property type="molecule type" value="Genomic_DNA"/>
</dbReference>
<dbReference type="RefSeq" id="WP_000940595.1">
    <property type="nucleotide sequence ID" value="NC_007606.1"/>
</dbReference>
<dbReference type="RefSeq" id="YP_404848.1">
    <property type="nucleotide sequence ID" value="NC_007606.1"/>
</dbReference>
<dbReference type="SMR" id="Q32BE8"/>
<dbReference type="STRING" id="300267.SDY_3366"/>
<dbReference type="EnsemblBacteria" id="ABB63357">
    <property type="protein sequence ID" value="ABB63357"/>
    <property type="gene ID" value="SDY_3366"/>
</dbReference>
<dbReference type="GeneID" id="93778796"/>
<dbReference type="KEGG" id="sdy:SDY_3366"/>
<dbReference type="PATRIC" id="fig|300267.13.peg.4020"/>
<dbReference type="HOGENOM" id="CLU_095424_4_1_6"/>
<dbReference type="Proteomes" id="UP000002716">
    <property type="component" value="Chromosome"/>
</dbReference>
<dbReference type="GO" id="GO:0022625">
    <property type="term" value="C:cytosolic large ribosomal subunit"/>
    <property type="evidence" value="ECO:0007669"/>
    <property type="project" value="TreeGrafter"/>
</dbReference>
<dbReference type="GO" id="GO:0003735">
    <property type="term" value="F:structural constituent of ribosome"/>
    <property type="evidence" value="ECO:0007669"/>
    <property type="project" value="InterPro"/>
</dbReference>
<dbReference type="GO" id="GO:0006412">
    <property type="term" value="P:translation"/>
    <property type="evidence" value="ECO:0007669"/>
    <property type="project" value="UniProtKB-UniRule"/>
</dbReference>
<dbReference type="FunFam" id="2.40.50.100:FF:000001">
    <property type="entry name" value="50S ribosomal protein L27"/>
    <property type="match status" value="1"/>
</dbReference>
<dbReference type="Gene3D" id="2.40.50.100">
    <property type="match status" value="1"/>
</dbReference>
<dbReference type="HAMAP" id="MF_00539">
    <property type="entry name" value="Ribosomal_bL27"/>
    <property type="match status" value="1"/>
</dbReference>
<dbReference type="InterPro" id="IPR001684">
    <property type="entry name" value="Ribosomal_bL27"/>
</dbReference>
<dbReference type="InterPro" id="IPR018261">
    <property type="entry name" value="Ribosomal_bL27_CS"/>
</dbReference>
<dbReference type="NCBIfam" id="TIGR00062">
    <property type="entry name" value="L27"/>
    <property type="match status" value="1"/>
</dbReference>
<dbReference type="PANTHER" id="PTHR15893:SF0">
    <property type="entry name" value="LARGE RIBOSOMAL SUBUNIT PROTEIN BL27M"/>
    <property type="match status" value="1"/>
</dbReference>
<dbReference type="PANTHER" id="PTHR15893">
    <property type="entry name" value="RIBOSOMAL PROTEIN L27"/>
    <property type="match status" value="1"/>
</dbReference>
<dbReference type="Pfam" id="PF01016">
    <property type="entry name" value="Ribosomal_L27"/>
    <property type="match status" value="1"/>
</dbReference>
<dbReference type="PRINTS" id="PR00063">
    <property type="entry name" value="RIBOSOMALL27"/>
</dbReference>
<dbReference type="SUPFAM" id="SSF110324">
    <property type="entry name" value="Ribosomal L27 protein-like"/>
    <property type="match status" value="1"/>
</dbReference>
<dbReference type="PROSITE" id="PS00831">
    <property type="entry name" value="RIBOSOMAL_L27"/>
    <property type="match status" value="1"/>
</dbReference>
<name>RL27_SHIDS</name>
<gene>
    <name evidence="1" type="primary">rpmA</name>
    <name type="ordered locus">SDY_3366</name>
</gene>